<reference key="1">
    <citation type="submission" date="2008-02" db="EMBL/GenBank/DDBJ databases">
        <title>Complete sequence of chromosome of Methylobacterium sp. 4-46.</title>
        <authorList>
            <consortium name="US DOE Joint Genome Institute"/>
            <person name="Copeland A."/>
            <person name="Lucas S."/>
            <person name="Lapidus A."/>
            <person name="Glavina del Rio T."/>
            <person name="Dalin E."/>
            <person name="Tice H."/>
            <person name="Bruce D."/>
            <person name="Goodwin L."/>
            <person name="Pitluck S."/>
            <person name="Chertkov O."/>
            <person name="Brettin T."/>
            <person name="Detter J.C."/>
            <person name="Han C."/>
            <person name="Kuske C.R."/>
            <person name="Schmutz J."/>
            <person name="Larimer F."/>
            <person name="Land M."/>
            <person name="Hauser L."/>
            <person name="Kyrpides N."/>
            <person name="Ivanova N."/>
            <person name="Marx C.J."/>
            <person name="Richardson P."/>
        </authorList>
    </citation>
    <scope>NUCLEOTIDE SEQUENCE [LARGE SCALE GENOMIC DNA]</scope>
    <source>
        <strain>4-46</strain>
    </source>
</reference>
<keyword id="KW-0963">Cytoplasm</keyword>
<keyword id="KW-0342">GTP-binding</keyword>
<keyword id="KW-0378">Hydrolase</keyword>
<keyword id="KW-0460">Magnesium</keyword>
<keyword id="KW-0479">Metal-binding</keyword>
<keyword id="KW-0547">Nucleotide-binding</keyword>
<accession>B0UMS4</accession>
<comment type="function">
    <text evidence="1">An essential GTPase which binds GTP, GDP and possibly (p)ppGpp with moderate affinity, with high nucleotide exchange rates and a fairly low GTP hydrolysis rate. Plays a role in control of the cell cycle, stress response, ribosome biogenesis and in those bacteria that undergo differentiation, in morphogenesis control.</text>
</comment>
<comment type="cofactor">
    <cofactor evidence="1">
        <name>Mg(2+)</name>
        <dbReference type="ChEBI" id="CHEBI:18420"/>
    </cofactor>
</comment>
<comment type="subunit">
    <text evidence="1">Monomer.</text>
</comment>
<comment type="subcellular location">
    <subcellularLocation>
        <location evidence="1">Cytoplasm</location>
    </subcellularLocation>
</comment>
<comment type="similarity">
    <text evidence="1">Belongs to the TRAFAC class OBG-HflX-like GTPase superfamily. OBG GTPase family.</text>
</comment>
<evidence type="ECO:0000255" key="1">
    <source>
        <dbReference type="HAMAP-Rule" id="MF_01454"/>
    </source>
</evidence>
<evidence type="ECO:0000255" key="2">
    <source>
        <dbReference type="PROSITE-ProRule" id="PRU01231"/>
    </source>
</evidence>
<organism>
    <name type="scientific">Methylobacterium sp. (strain 4-46)</name>
    <dbReference type="NCBI Taxonomy" id="426117"/>
    <lineage>
        <taxon>Bacteria</taxon>
        <taxon>Pseudomonadati</taxon>
        <taxon>Pseudomonadota</taxon>
        <taxon>Alphaproteobacteria</taxon>
        <taxon>Hyphomicrobiales</taxon>
        <taxon>Methylobacteriaceae</taxon>
        <taxon>Methylobacterium</taxon>
    </lineage>
</organism>
<name>OBG_METS4</name>
<dbReference type="EC" id="3.6.5.-" evidence="1"/>
<dbReference type="EMBL" id="CP000943">
    <property type="protein sequence ID" value="ACA18562.1"/>
    <property type="molecule type" value="Genomic_DNA"/>
</dbReference>
<dbReference type="SMR" id="B0UMS4"/>
<dbReference type="STRING" id="426117.M446_4213"/>
<dbReference type="KEGG" id="met:M446_4213"/>
<dbReference type="eggNOG" id="COG0536">
    <property type="taxonomic scope" value="Bacteria"/>
</dbReference>
<dbReference type="HOGENOM" id="CLU_011747_2_0_5"/>
<dbReference type="GO" id="GO:0005737">
    <property type="term" value="C:cytoplasm"/>
    <property type="evidence" value="ECO:0007669"/>
    <property type="project" value="UniProtKB-SubCell"/>
</dbReference>
<dbReference type="GO" id="GO:0005525">
    <property type="term" value="F:GTP binding"/>
    <property type="evidence" value="ECO:0007669"/>
    <property type="project" value="UniProtKB-UniRule"/>
</dbReference>
<dbReference type="GO" id="GO:0003924">
    <property type="term" value="F:GTPase activity"/>
    <property type="evidence" value="ECO:0007669"/>
    <property type="project" value="UniProtKB-UniRule"/>
</dbReference>
<dbReference type="GO" id="GO:0000287">
    <property type="term" value="F:magnesium ion binding"/>
    <property type="evidence" value="ECO:0007669"/>
    <property type="project" value="InterPro"/>
</dbReference>
<dbReference type="GO" id="GO:0042254">
    <property type="term" value="P:ribosome biogenesis"/>
    <property type="evidence" value="ECO:0007669"/>
    <property type="project" value="UniProtKB-UniRule"/>
</dbReference>
<dbReference type="CDD" id="cd01898">
    <property type="entry name" value="Obg"/>
    <property type="match status" value="1"/>
</dbReference>
<dbReference type="FunFam" id="2.70.210.12:FF:000001">
    <property type="entry name" value="GTPase Obg"/>
    <property type="match status" value="1"/>
</dbReference>
<dbReference type="Gene3D" id="2.70.210.12">
    <property type="entry name" value="GTP1/OBG domain"/>
    <property type="match status" value="1"/>
</dbReference>
<dbReference type="Gene3D" id="3.40.50.300">
    <property type="entry name" value="P-loop containing nucleotide triphosphate hydrolases"/>
    <property type="match status" value="1"/>
</dbReference>
<dbReference type="HAMAP" id="MF_01454">
    <property type="entry name" value="GTPase_Obg"/>
    <property type="match status" value="1"/>
</dbReference>
<dbReference type="InterPro" id="IPR031167">
    <property type="entry name" value="G_OBG"/>
</dbReference>
<dbReference type="InterPro" id="IPR006073">
    <property type="entry name" value="GTP-bd"/>
</dbReference>
<dbReference type="InterPro" id="IPR014100">
    <property type="entry name" value="GTP-bd_Obg/CgtA"/>
</dbReference>
<dbReference type="InterPro" id="IPR006074">
    <property type="entry name" value="GTP1-OBG_CS"/>
</dbReference>
<dbReference type="InterPro" id="IPR006169">
    <property type="entry name" value="GTP1_OBG_dom"/>
</dbReference>
<dbReference type="InterPro" id="IPR036726">
    <property type="entry name" value="GTP1_OBG_dom_sf"/>
</dbReference>
<dbReference type="InterPro" id="IPR045086">
    <property type="entry name" value="OBG_GTPase"/>
</dbReference>
<dbReference type="InterPro" id="IPR027417">
    <property type="entry name" value="P-loop_NTPase"/>
</dbReference>
<dbReference type="NCBIfam" id="TIGR02729">
    <property type="entry name" value="Obg_CgtA"/>
    <property type="match status" value="1"/>
</dbReference>
<dbReference type="NCBIfam" id="NF008955">
    <property type="entry name" value="PRK12297.1"/>
    <property type="match status" value="1"/>
</dbReference>
<dbReference type="NCBIfam" id="NF008956">
    <property type="entry name" value="PRK12299.1"/>
    <property type="match status" value="1"/>
</dbReference>
<dbReference type="PANTHER" id="PTHR11702">
    <property type="entry name" value="DEVELOPMENTALLY REGULATED GTP-BINDING PROTEIN-RELATED"/>
    <property type="match status" value="1"/>
</dbReference>
<dbReference type="PANTHER" id="PTHR11702:SF31">
    <property type="entry name" value="MITOCHONDRIAL RIBOSOME-ASSOCIATED GTPASE 2"/>
    <property type="match status" value="1"/>
</dbReference>
<dbReference type="Pfam" id="PF01018">
    <property type="entry name" value="GTP1_OBG"/>
    <property type="match status" value="1"/>
</dbReference>
<dbReference type="Pfam" id="PF01926">
    <property type="entry name" value="MMR_HSR1"/>
    <property type="match status" value="1"/>
</dbReference>
<dbReference type="PIRSF" id="PIRSF002401">
    <property type="entry name" value="GTP_bd_Obg/CgtA"/>
    <property type="match status" value="1"/>
</dbReference>
<dbReference type="PRINTS" id="PR00326">
    <property type="entry name" value="GTP1OBG"/>
</dbReference>
<dbReference type="SUPFAM" id="SSF82051">
    <property type="entry name" value="Obg GTP-binding protein N-terminal domain"/>
    <property type="match status" value="1"/>
</dbReference>
<dbReference type="SUPFAM" id="SSF52540">
    <property type="entry name" value="P-loop containing nucleoside triphosphate hydrolases"/>
    <property type="match status" value="1"/>
</dbReference>
<dbReference type="PROSITE" id="PS51710">
    <property type="entry name" value="G_OBG"/>
    <property type="match status" value="1"/>
</dbReference>
<dbReference type="PROSITE" id="PS00905">
    <property type="entry name" value="GTP1_OBG"/>
    <property type="match status" value="1"/>
</dbReference>
<dbReference type="PROSITE" id="PS51883">
    <property type="entry name" value="OBG"/>
    <property type="match status" value="1"/>
</dbReference>
<protein>
    <recommendedName>
        <fullName evidence="1">GTPase Obg</fullName>
        <ecNumber evidence="1">3.6.5.-</ecNumber>
    </recommendedName>
    <alternativeName>
        <fullName evidence="1">GTP-binding protein Obg</fullName>
    </alternativeName>
</protein>
<feature type="chain" id="PRO_0000386044" description="GTPase Obg">
    <location>
        <begin position="1"/>
        <end position="343"/>
    </location>
</feature>
<feature type="domain" description="Obg" evidence="2">
    <location>
        <begin position="1"/>
        <end position="159"/>
    </location>
</feature>
<feature type="domain" description="OBG-type G" evidence="1">
    <location>
        <begin position="160"/>
        <end position="327"/>
    </location>
</feature>
<feature type="binding site" evidence="1">
    <location>
        <begin position="166"/>
        <end position="173"/>
    </location>
    <ligand>
        <name>GTP</name>
        <dbReference type="ChEBI" id="CHEBI:37565"/>
    </ligand>
</feature>
<feature type="binding site" evidence="1">
    <location>
        <position position="173"/>
    </location>
    <ligand>
        <name>Mg(2+)</name>
        <dbReference type="ChEBI" id="CHEBI:18420"/>
    </ligand>
</feature>
<feature type="binding site" evidence="1">
    <location>
        <begin position="191"/>
        <end position="195"/>
    </location>
    <ligand>
        <name>GTP</name>
        <dbReference type="ChEBI" id="CHEBI:37565"/>
    </ligand>
</feature>
<feature type="binding site" evidence="1">
    <location>
        <position position="193"/>
    </location>
    <ligand>
        <name>Mg(2+)</name>
        <dbReference type="ChEBI" id="CHEBI:18420"/>
    </ligand>
</feature>
<feature type="binding site" evidence="1">
    <location>
        <begin position="212"/>
        <end position="215"/>
    </location>
    <ligand>
        <name>GTP</name>
        <dbReference type="ChEBI" id="CHEBI:37565"/>
    </ligand>
</feature>
<feature type="binding site" evidence="1">
    <location>
        <begin position="279"/>
        <end position="282"/>
    </location>
    <ligand>
        <name>GTP</name>
        <dbReference type="ChEBI" id="CHEBI:37565"/>
    </ligand>
</feature>
<feature type="binding site" evidence="1">
    <location>
        <begin position="308"/>
        <end position="310"/>
    </location>
    <ligand>
        <name>GTP</name>
        <dbReference type="ChEBI" id="CHEBI:37565"/>
    </ligand>
</feature>
<sequence length="343" mass="36616">MKFLDEAKVYVRSGDGGAGCVSFRREKFIEFGGPDGGDGGRGGDVWAECVEGLNTLIDYRYQQHFKAKKGEHGSGRNRAGAKGGDVVLKVPAGTQILAEDRETLVADLTRVGQRVLLARGGNGGFGNAYFTTSTNRAPRHANPGQEGQEHWLWLRLKLIADAGLVGLPNAGKSTFLATVTAAKPKIADYPFTTLHPGLGVVRVDTREFVLADIPGLIEGAHEGVGLGDRFLAHVERCRVLLHLVEGTSEDAGAAYRLVRAELEAYGHGLADKPEIVALSKADILDPERLEAQVASLEAACGRRPLVISAATRRGVPEALRALLAAMDRAQAEAAPEKAEAWQP</sequence>
<proteinExistence type="inferred from homology"/>
<gene>
    <name evidence="1" type="primary">obg</name>
    <name type="ordered locus">M446_4213</name>
</gene>